<dbReference type="EMBL" id="CP001091">
    <property type="protein sequence ID" value="ACE61722.1"/>
    <property type="molecule type" value="Genomic_DNA"/>
</dbReference>
<dbReference type="RefSeq" id="WP_005597793.1">
    <property type="nucleotide sequence ID" value="NC_010939.1"/>
</dbReference>
<dbReference type="SMR" id="B3H1P5"/>
<dbReference type="KEGG" id="apa:APP7_1070"/>
<dbReference type="HOGENOM" id="CLU_132825_1_1_6"/>
<dbReference type="Proteomes" id="UP000001226">
    <property type="component" value="Chromosome"/>
</dbReference>
<dbReference type="GO" id="GO:0005737">
    <property type="term" value="C:cytoplasm"/>
    <property type="evidence" value="ECO:0007669"/>
    <property type="project" value="UniProtKB-SubCell"/>
</dbReference>
<dbReference type="GO" id="GO:0005524">
    <property type="term" value="F:ATP binding"/>
    <property type="evidence" value="ECO:0007669"/>
    <property type="project" value="InterPro"/>
</dbReference>
<dbReference type="GO" id="GO:0046872">
    <property type="term" value="F:metal ion binding"/>
    <property type="evidence" value="ECO:0007669"/>
    <property type="project" value="TreeGrafter"/>
</dbReference>
<dbReference type="GO" id="GO:0044183">
    <property type="term" value="F:protein folding chaperone"/>
    <property type="evidence" value="ECO:0007669"/>
    <property type="project" value="InterPro"/>
</dbReference>
<dbReference type="GO" id="GO:0051087">
    <property type="term" value="F:protein-folding chaperone binding"/>
    <property type="evidence" value="ECO:0007669"/>
    <property type="project" value="TreeGrafter"/>
</dbReference>
<dbReference type="GO" id="GO:0051082">
    <property type="term" value="F:unfolded protein binding"/>
    <property type="evidence" value="ECO:0007669"/>
    <property type="project" value="TreeGrafter"/>
</dbReference>
<dbReference type="GO" id="GO:0051085">
    <property type="term" value="P:chaperone cofactor-dependent protein refolding"/>
    <property type="evidence" value="ECO:0007669"/>
    <property type="project" value="TreeGrafter"/>
</dbReference>
<dbReference type="CDD" id="cd00320">
    <property type="entry name" value="cpn10"/>
    <property type="match status" value="1"/>
</dbReference>
<dbReference type="FunFam" id="2.30.33.40:FF:000001">
    <property type="entry name" value="10 kDa chaperonin"/>
    <property type="match status" value="1"/>
</dbReference>
<dbReference type="Gene3D" id="2.30.33.40">
    <property type="entry name" value="GroES chaperonin"/>
    <property type="match status" value="1"/>
</dbReference>
<dbReference type="HAMAP" id="MF_00580">
    <property type="entry name" value="CH10"/>
    <property type="match status" value="1"/>
</dbReference>
<dbReference type="InterPro" id="IPR020818">
    <property type="entry name" value="Chaperonin_GroES"/>
</dbReference>
<dbReference type="InterPro" id="IPR037124">
    <property type="entry name" value="Chaperonin_GroES_sf"/>
</dbReference>
<dbReference type="InterPro" id="IPR018369">
    <property type="entry name" value="Chaprnonin_Cpn10_CS"/>
</dbReference>
<dbReference type="InterPro" id="IPR011032">
    <property type="entry name" value="GroES-like_sf"/>
</dbReference>
<dbReference type="NCBIfam" id="NF001526">
    <property type="entry name" value="PRK00364.1-1"/>
    <property type="match status" value="1"/>
</dbReference>
<dbReference type="PANTHER" id="PTHR10772">
    <property type="entry name" value="10 KDA HEAT SHOCK PROTEIN"/>
    <property type="match status" value="1"/>
</dbReference>
<dbReference type="PANTHER" id="PTHR10772:SF58">
    <property type="entry name" value="CO-CHAPERONIN GROES"/>
    <property type="match status" value="1"/>
</dbReference>
<dbReference type="Pfam" id="PF00166">
    <property type="entry name" value="Cpn10"/>
    <property type="match status" value="1"/>
</dbReference>
<dbReference type="PRINTS" id="PR00297">
    <property type="entry name" value="CHAPERONIN10"/>
</dbReference>
<dbReference type="SMART" id="SM00883">
    <property type="entry name" value="Cpn10"/>
    <property type="match status" value="1"/>
</dbReference>
<dbReference type="SUPFAM" id="SSF50129">
    <property type="entry name" value="GroES-like"/>
    <property type="match status" value="1"/>
</dbReference>
<dbReference type="PROSITE" id="PS00681">
    <property type="entry name" value="CHAPERONINS_CPN10"/>
    <property type="match status" value="1"/>
</dbReference>
<feature type="chain" id="PRO_1000129617" description="Co-chaperonin GroES">
    <location>
        <begin position="1"/>
        <end position="96"/>
    </location>
</feature>
<evidence type="ECO:0000255" key="1">
    <source>
        <dbReference type="HAMAP-Rule" id="MF_00580"/>
    </source>
</evidence>
<gene>
    <name evidence="1" type="primary">groES</name>
    <name evidence="1" type="synonym">groS</name>
    <name type="ordered locus">APP7_1070</name>
</gene>
<proteinExistence type="inferred from homology"/>
<sequence length="96" mass="10174">MTLRPLHDKVILKREEVETRSAGGIVLTGSAATKSTRGKVIAVGTGRLLENGSVQALAVKVGDVVIFNEGYGVKSEKIDGEEVLILSENDILAIVE</sequence>
<name>CH10_ACTP7</name>
<reference key="1">
    <citation type="submission" date="2008-06" db="EMBL/GenBank/DDBJ databases">
        <title>Genome and proteome analysis of A. pleuropneumoniae serotype 7.</title>
        <authorList>
            <person name="Linke B."/>
            <person name="Buettner F."/>
            <person name="Martinez-Arias R."/>
            <person name="Goesmann A."/>
            <person name="Baltes N."/>
            <person name="Tegetmeyer H."/>
            <person name="Singh M."/>
            <person name="Gerlach G.F."/>
        </authorList>
    </citation>
    <scope>NUCLEOTIDE SEQUENCE [LARGE SCALE GENOMIC DNA]</scope>
    <source>
        <strain>AP76</strain>
    </source>
</reference>
<comment type="function">
    <text evidence="1">Together with the chaperonin GroEL, plays an essential role in assisting protein folding. The GroEL-GroES system forms a nano-cage that allows encapsulation of the non-native substrate proteins and provides a physical environment optimized to promote and accelerate protein folding. GroES binds to the apical surface of the GroEL ring, thereby capping the opening of the GroEL channel.</text>
</comment>
<comment type="subunit">
    <text evidence="1">Heptamer of 7 subunits arranged in a ring. Interacts with the chaperonin GroEL.</text>
</comment>
<comment type="subcellular location">
    <subcellularLocation>
        <location evidence="1">Cytoplasm</location>
    </subcellularLocation>
</comment>
<comment type="similarity">
    <text evidence="1">Belongs to the GroES chaperonin family.</text>
</comment>
<accession>B3H1P5</accession>
<organism>
    <name type="scientific">Actinobacillus pleuropneumoniae serotype 7 (strain AP76)</name>
    <dbReference type="NCBI Taxonomy" id="537457"/>
    <lineage>
        <taxon>Bacteria</taxon>
        <taxon>Pseudomonadati</taxon>
        <taxon>Pseudomonadota</taxon>
        <taxon>Gammaproteobacteria</taxon>
        <taxon>Pasteurellales</taxon>
        <taxon>Pasteurellaceae</taxon>
        <taxon>Actinobacillus</taxon>
    </lineage>
</organism>
<keyword id="KW-0143">Chaperone</keyword>
<keyword id="KW-0963">Cytoplasm</keyword>
<protein>
    <recommendedName>
        <fullName evidence="1">Co-chaperonin GroES</fullName>
    </recommendedName>
    <alternativeName>
        <fullName evidence="1">10 kDa chaperonin</fullName>
    </alternativeName>
    <alternativeName>
        <fullName evidence="1">Chaperonin-10</fullName>
        <shortName evidence="1">Cpn10</shortName>
    </alternativeName>
</protein>